<proteinExistence type="evidence at protein level"/>
<organism>
    <name type="scientific">Sus scrofa</name>
    <name type="common">Pig</name>
    <dbReference type="NCBI Taxonomy" id="9823"/>
    <lineage>
        <taxon>Eukaryota</taxon>
        <taxon>Metazoa</taxon>
        <taxon>Chordata</taxon>
        <taxon>Craniata</taxon>
        <taxon>Vertebrata</taxon>
        <taxon>Euteleostomi</taxon>
        <taxon>Mammalia</taxon>
        <taxon>Eutheria</taxon>
        <taxon>Laurasiatheria</taxon>
        <taxon>Artiodactyla</taxon>
        <taxon>Suina</taxon>
        <taxon>Suidae</taxon>
        <taxon>Sus</taxon>
    </lineage>
</organism>
<evidence type="ECO:0000250" key="1"/>
<evidence type="ECO:0000250" key="2">
    <source>
        <dbReference type="UniProtKB" id="P02656"/>
    </source>
</evidence>
<evidence type="ECO:0000255" key="3"/>
<evidence type="ECO:0000269" key="4">
    <source>
    </source>
</evidence>
<evidence type="ECO:0000269" key="5">
    <source>
    </source>
</evidence>
<evidence type="ECO:0000305" key="6"/>
<accession>P27917</accession>
<accession>Q29208</accession>
<keyword id="KW-0162">Chylomicron</keyword>
<keyword id="KW-0903">Direct protein sequencing</keyword>
<keyword id="KW-0442">Lipid degradation</keyword>
<keyword id="KW-0443">Lipid metabolism</keyword>
<keyword id="KW-0445">Lipid transport</keyword>
<keyword id="KW-1185">Reference proteome</keyword>
<keyword id="KW-0964">Secreted</keyword>
<keyword id="KW-0732">Signal</keyword>
<keyword id="KW-0813">Transport</keyword>
<keyword id="KW-0850">VLDL</keyword>
<gene>
    <name type="primary">APOC3</name>
</gene>
<dbReference type="EMBL" id="L00627">
    <property type="protein sequence ID" value="AAA30993.1"/>
    <property type="molecule type" value="Genomic_DNA"/>
</dbReference>
<dbReference type="EMBL" id="F14536">
    <property type="protein sequence ID" value="CAA23113.1"/>
    <property type="molecule type" value="mRNA"/>
</dbReference>
<dbReference type="EMBL" id="M84133">
    <property type="status" value="NOT_ANNOTATED_CDS"/>
    <property type="molecule type" value="mRNA"/>
</dbReference>
<dbReference type="EMBL" id="M84134">
    <property type="status" value="NOT_ANNOTATED_CDS"/>
    <property type="molecule type" value="Genomic_DNA"/>
</dbReference>
<dbReference type="PIR" id="B46018">
    <property type="entry name" value="B46018"/>
</dbReference>
<dbReference type="RefSeq" id="NP_001002801.1">
    <property type="nucleotide sequence ID" value="NM_001002801.1"/>
</dbReference>
<dbReference type="RefSeq" id="XP_005667429.1">
    <property type="nucleotide sequence ID" value="XM_005667372.2"/>
</dbReference>
<dbReference type="RefSeq" id="XP_005667430.1">
    <property type="nucleotide sequence ID" value="XM_005667373.1"/>
</dbReference>
<dbReference type="RefSeq" id="XP_020957906.1">
    <property type="nucleotide sequence ID" value="XM_021102247.1"/>
</dbReference>
<dbReference type="RefSeq" id="XP_020957907.1">
    <property type="nucleotide sequence ID" value="XM_021102248.1"/>
</dbReference>
<dbReference type="SMR" id="P27917"/>
<dbReference type="FunCoup" id="P27917">
    <property type="interactions" value="322"/>
</dbReference>
<dbReference type="STRING" id="9823.ENSSSCP00000063050"/>
<dbReference type="PaxDb" id="9823-ENSSSCP00000015993"/>
<dbReference type="PeptideAtlas" id="P27917"/>
<dbReference type="Ensembl" id="ENSSSCT00000016435.4">
    <property type="protein sequence ID" value="ENSSSCP00000015993.2"/>
    <property type="gene ID" value="ENSSSCG00000015069.5"/>
</dbReference>
<dbReference type="Ensembl" id="ENSSSCT00015106164.1">
    <property type="protein sequence ID" value="ENSSSCP00015044612.1"/>
    <property type="gene ID" value="ENSSSCG00015078430.1"/>
</dbReference>
<dbReference type="Ensembl" id="ENSSSCT00025008549.1">
    <property type="protein sequence ID" value="ENSSSCP00025003367.1"/>
    <property type="gene ID" value="ENSSSCG00025006471.1"/>
</dbReference>
<dbReference type="Ensembl" id="ENSSSCT00030090701.1">
    <property type="protein sequence ID" value="ENSSSCP00030041772.1"/>
    <property type="gene ID" value="ENSSSCG00030064837.1"/>
</dbReference>
<dbReference type="Ensembl" id="ENSSSCT00035030741.1">
    <property type="protein sequence ID" value="ENSSSCP00035012006.1"/>
    <property type="gene ID" value="ENSSSCG00035023450.1"/>
</dbReference>
<dbReference type="Ensembl" id="ENSSSCT00040033903.1">
    <property type="protein sequence ID" value="ENSSSCP00040013969.1"/>
    <property type="gene ID" value="ENSSSCG00040025123.1"/>
</dbReference>
<dbReference type="Ensembl" id="ENSSSCT00040034204.1">
    <property type="protein sequence ID" value="ENSSSCP00040014101.1"/>
    <property type="gene ID" value="ENSSSCG00040025123.1"/>
</dbReference>
<dbReference type="Ensembl" id="ENSSSCT00040034236.1">
    <property type="protein sequence ID" value="ENSSSCP00040014115.1"/>
    <property type="gene ID" value="ENSSSCG00040025123.1"/>
</dbReference>
<dbReference type="Ensembl" id="ENSSSCT00040034260.1">
    <property type="protein sequence ID" value="ENSSSCP00040014128.1"/>
    <property type="gene ID" value="ENSSSCG00040025123.1"/>
</dbReference>
<dbReference type="Ensembl" id="ENSSSCT00045024167.1">
    <property type="protein sequence ID" value="ENSSSCP00045016668.1"/>
    <property type="gene ID" value="ENSSSCG00045014192.1"/>
</dbReference>
<dbReference type="Ensembl" id="ENSSSCT00050089653.1">
    <property type="protein sequence ID" value="ENSSSCP00050038492.1"/>
    <property type="gene ID" value="ENSSSCG00050065822.1"/>
</dbReference>
<dbReference type="Ensembl" id="ENSSSCT00055026185.1">
    <property type="protein sequence ID" value="ENSSSCP00055020805.1"/>
    <property type="gene ID" value="ENSSSCG00055013290.1"/>
</dbReference>
<dbReference type="Ensembl" id="ENSSSCT00060017063.1">
    <property type="protein sequence ID" value="ENSSSCP00060006774.1"/>
    <property type="gene ID" value="ENSSSCG00060012997.1"/>
</dbReference>
<dbReference type="Ensembl" id="ENSSSCT00065007617.1">
    <property type="protein sequence ID" value="ENSSSCP00065003241.1"/>
    <property type="gene ID" value="ENSSSCG00065005643.1"/>
</dbReference>
<dbReference type="Ensembl" id="ENSSSCT00070010689.1">
    <property type="protein sequence ID" value="ENSSSCP00070008797.1"/>
    <property type="gene ID" value="ENSSSCG00070005639.1"/>
</dbReference>
<dbReference type="Ensembl" id="ENSSSCT00085033974">
    <property type="protein sequence ID" value="ENSSSCP00085023391"/>
    <property type="gene ID" value="ENSSSCG00085017885"/>
</dbReference>
<dbReference type="Ensembl" id="ENSSSCT00090044102">
    <property type="protein sequence ID" value="ENSSSCP00090027525"/>
    <property type="gene ID" value="ENSSSCG00090024899"/>
</dbReference>
<dbReference type="Ensembl" id="ENSSSCT00105010331">
    <property type="protein sequence ID" value="ENSSSCP00105007563"/>
    <property type="gene ID" value="ENSSSCG00105005158"/>
</dbReference>
<dbReference type="Ensembl" id="ENSSSCT00110045283">
    <property type="protein sequence ID" value="ENSSSCP00110031974"/>
    <property type="gene ID" value="ENSSSCG00110023395"/>
</dbReference>
<dbReference type="Ensembl" id="ENSSSCT00130050223">
    <property type="protein sequence ID" value="ENSSSCP00130035742"/>
    <property type="gene ID" value="ENSSSCG00130025786"/>
</dbReference>
<dbReference type="GeneID" id="406187"/>
<dbReference type="KEGG" id="ssc:406187"/>
<dbReference type="CTD" id="345"/>
<dbReference type="VGNC" id="VGNC:85421">
    <property type="gene designation" value="APOC3"/>
</dbReference>
<dbReference type="eggNOG" id="ENOG502SZ00">
    <property type="taxonomic scope" value="Eukaryota"/>
</dbReference>
<dbReference type="GeneTree" id="ENSGT00390000015395"/>
<dbReference type="HOGENOM" id="CLU_154694_0_0_1"/>
<dbReference type="InParanoid" id="P27917"/>
<dbReference type="OMA" id="YWSTFKG"/>
<dbReference type="OrthoDB" id="9049572at2759"/>
<dbReference type="TreeFam" id="TF338209"/>
<dbReference type="Reactome" id="R-SSC-8963888">
    <property type="pathway name" value="Chylomicron assembly"/>
</dbReference>
<dbReference type="Reactome" id="R-SSC-8963901">
    <property type="pathway name" value="Chylomicron remodeling"/>
</dbReference>
<dbReference type="Reactome" id="R-SSC-8964058">
    <property type="pathway name" value="HDL remodeling"/>
</dbReference>
<dbReference type="Reactome" id="R-SSC-975634">
    <property type="pathway name" value="Retinoid metabolism and transport"/>
</dbReference>
<dbReference type="Proteomes" id="UP000008227">
    <property type="component" value="Chromosome 9"/>
</dbReference>
<dbReference type="Proteomes" id="UP000314985">
    <property type="component" value="Chromosome 9"/>
</dbReference>
<dbReference type="Proteomes" id="UP000694570">
    <property type="component" value="Unplaced"/>
</dbReference>
<dbReference type="Proteomes" id="UP000694571">
    <property type="component" value="Unplaced"/>
</dbReference>
<dbReference type="Proteomes" id="UP000694720">
    <property type="component" value="Unplaced"/>
</dbReference>
<dbReference type="Proteomes" id="UP000694722">
    <property type="component" value="Unplaced"/>
</dbReference>
<dbReference type="Proteomes" id="UP000694723">
    <property type="component" value="Unplaced"/>
</dbReference>
<dbReference type="Proteomes" id="UP000694724">
    <property type="component" value="Unplaced"/>
</dbReference>
<dbReference type="Proteomes" id="UP000694725">
    <property type="component" value="Unplaced"/>
</dbReference>
<dbReference type="Proteomes" id="UP000694726">
    <property type="component" value="Unplaced"/>
</dbReference>
<dbReference type="Proteomes" id="UP000694727">
    <property type="component" value="Unplaced"/>
</dbReference>
<dbReference type="Proteomes" id="UP000694728">
    <property type="component" value="Unplaced"/>
</dbReference>
<dbReference type="Bgee" id="ENSSSCG00000015069">
    <property type="expression patterns" value="Expressed in liver and 24 other cell types or tissues"/>
</dbReference>
<dbReference type="ExpressionAtlas" id="P27917">
    <property type="expression patterns" value="baseline and differential"/>
</dbReference>
<dbReference type="GO" id="GO:0042627">
    <property type="term" value="C:chylomicron"/>
    <property type="evidence" value="ECO:0000318"/>
    <property type="project" value="GO_Central"/>
</dbReference>
<dbReference type="GO" id="GO:0034363">
    <property type="term" value="C:intermediate-density lipoprotein particle"/>
    <property type="evidence" value="ECO:0000318"/>
    <property type="project" value="GO_Central"/>
</dbReference>
<dbReference type="GO" id="GO:0034366">
    <property type="term" value="C:spherical high-density lipoprotein particle"/>
    <property type="evidence" value="ECO:0000318"/>
    <property type="project" value="GO_Central"/>
</dbReference>
<dbReference type="GO" id="GO:0034361">
    <property type="term" value="C:very-low-density lipoprotein particle"/>
    <property type="evidence" value="ECO:0000318"/>
    <property type="project" value="GO_Central"/>
</dbReference>
<dbReference type="GO" id="GO:0070653">
    <property type="term" value="F:high-density lipoprotein particle receptor binding"/>
    <property type="evidence" value="ECO:0000318"/>
    <property type="project" value="GO_Central"/>
</dbReference>
<dbReference type="GO" id="GO:0055102">
    <property type="term" value="F:lipase inhibitor activity"/>
    <property type="evidence" value="ECO:0000318"/>
    <property type="project" value="GO_Central"/>
</dbReference>
<dbReference type="GO" id="GO:0005543">
    <property type="term" value="F:phospholipid binding"/>
    <property type="evidence" value="ECO:0000318"/>
    <property type="project" value="GO_Central"/>
</dbReference>
<dbReference type="GO" id="GO:0033344">
    <property type="term" value="P:cholesterol efflux"/>
    <property type="evidence" value="ECO:0007669"/>
    <property type="project" value="Ensembl"/>
</dbReference>
<dbReference type="GO" id="GO:0042632">
    <property type="term" value="P:cholesterol homeostasis"/>
    <property type="evidence" value="ECO:0000318"/>
    <property type="project" value="GO_Central"/>
</dbReference>
<dbReference type="GO" id="GO:0034382">
    <property type="term" value="P:chylomicron remnant clearance"/>
    <property type="evidence" value="ECO:0007669"/>
    <property type="project" value="Ensembl"/>
</dbReference>
<dbReference type="GO" id="GO:0007186">
    <property type="term" value="P:G protein-coupled receptor signaling pathway"/>
    <property type="evidence" value="ECO:0007669"/>
    <property type="project" value="Ensembl"/>
</dbReference>
<dbReference type="GO" id="GO:0034375">
    <property type="term" value="P:high-density lipoprotein particle remodeling"/>
    <property type="evidence" value="ECO:0007669"/>
    <property type="project" value="Ensembl"/>
</dbReference>
<dbReference type="GO" id="GO:0042157">
    <property type="term" value="P:lipoprotein metabolic process"/>
    <property type="evidence" value="ECO:0007669"/>
    <property type="project" value="InterPro"/>
</dbReference>
<dbReference type="GO" id="GO:0060621">
    <property type="term" value="P:negative regulation of cholesterol import"/>
    <property type="evidence" value="ECO:0007669"/>
    <property type="project" value="Ensembl"/>
</dbReference>
<dbReference type="GO" id="GO:0045717">
    <property type="term" value="P:negative regulation of fatty acid biosynthetic process"/>
    <property type="evidence" value="ECO:0007669"/>
    <property type="project" value="Ensembl"/>
</dbReference>
<dbReference type="GO" id="GO:0010987">
    <property type="term" value="P:negative regulation of high-density lipoprotein particle clearance"/>
    <property type="evidence" value="ECO:0000318"/>
    <property type="project" value="GO_Central"/>
</dbReference>
<dbReference type="GO" id="GO:0010989">
    <property type="term" value="P:negative regulation of low-density lipoprotein particle clearance"/>
    <property type="evidence" value="ECO:0000318"/>
    <property type="project" value="GO_Central"/>
</dbReference>
<dbReference type="GO" id="GO:0048261">
    <property type="term" value="P:negative regulation of receptor-mediated endocytosis"/>
    <property type="evidence" value="ECO:0007669"/>
    <property type="project" value="Ensembl"/>
</dbReference>
<dbReference type="GO" id="GO:0010897">
    <property type="term" value="P:negative regulation of triglyceride catabolic process"/>
    <property type="evidence" value="ECO:0000318"/>
    <property type="project" value="GO_Central"/>
</dbReference>
<dbReference type="GO" id="GO:0010916">
    <property type="term" value="P:negative regulation of very-low-density lipoprotein particle clearance"/>
    <property type="evidence" value="ECO:0000318"/>
    <property type="project" value="GO_Central"/>
</dbReference>
<dbReference type="GO" id="GO:0010903">
    <property type="term" value="P:negative regulation of very-low-density lipoprotein particle remodeling"/>
    <property type="evidence" value="ECO:0007669"/>
    <property type="project" value="Ensembl"/>
</dbReference>
<dbReference type="GO" id="GO:0033700">
    <property type="term" value="P:phospholipid efflux"/>
    <property type="evidence" value="ECO:0007669"/>
    <property type="project" value="Ensembl"/>
</dbReference>
<dbReference type="GO" id="GO:0032489">
    <property type="term" value="P:regulation of Cdc42 protein signal transduction"/>
    <property type="evidence" value="ECO:0007669"/>
    <property type="project" value="Ensembl"/>
</dbReference>
<dbReference type="GO" id="GO:0019433">
    <property type="term" value="P:triglyceride catabolic process"/>
    <property type="evidence" value="ECO:0000318"/>
    <property type="project" value="GO_Central"/>
</dbReference>
<dbReference type="GO" id="GO:0070328">
    <property type="term" value="P:triglyceride homeostasis"/>
    <property type="evidence" value="ECO:0000318"/>
    <property type="project" value="GO_Central"/>
</dbReference>
<dbReference type="Gene3D" id="6.10.90.10">
    <property type="entry name" value="Apolipoprotein CIII"/>
    <property type="match status" value="1"/>
</dbReference>
<dbReference type="InterPro" id="IPR008403">
    <property type="entry name" value="Apo-CIII"/>
</dbReference>
<dbReference type="InterPro" id="IPR038195">
    <property type="entry name" value="Apo_CIII_sf"/>
</dbReference>
<dbReference type="PANTHER" id="PTHR14225">
    <property type="entry name" value="APOLIPOPROTEIN C-III"/>
    <property type="match status" value="1"/>
</dbReference>
<dbReference type="PANTHER" id="PTHR14225:SF0">
    <property type="entry name" value="APOLIPOPROTEIN C-III"/>
    <property type="match status" value="1"/>
</dbReference>
<dbReference type="Pfam" id="PF05778">
    <property type="entry name" value="Apo-CIII"/>
    <property type="match status" value="1"/>
</dbReference>
<dbReference type="SUPFAM" id="SSF47162">
    <property type="entry name" value="Apolipoprotein"/>
    <property type="match status" value="1"/>
</dbReference>
<comment type="function">
    <text evidence="2">Component of triglyceride-rich very low density lipoproteins (VLDL) and high density lipoproteins (HDL) in plasma. Plays a multifaceted role in triglyceride homeostasis. Intracellularly, promotes hepatic very low density lipoprotein 1 (VLDL1) assembly and secretion; extracellularly, attenuates hydrolysis and clearance of triglyceride-rich lipoproteins (TRLs). Impairs the lipolysis of TRLs by inhibiting lipoprotein lipase and the hepatic uptake of TRLs by remnant receptors. Formed of several curved helices connected via semiflexible hinges, so that it can wrap tightly around the curved micelle surface and easily adapt to the different diameters of its natural binding partners.</text>
</comment>
<comment type="subcellular location">
    <subcellularLocation>
        <location evidence="2">Secreted</location>
    </subcellularLocation>
</comment>
<comment type="tissue specificity">
    <text evidence="4 5">Synthesized predominantly in liver and to a lesser degree in intestine.</text>
</comment>
<comment type="similarity">
    <text evidence="6">Belongs to the apolipoprotein C3 family.</text>
</comment>
<feature type="signal peptide" evidence="3">
    <location>
        <begin position="1"/>
        <end position="23"/>
    </location>
</feature>
<feature type="chain" id="PRO_0000002034" description="Apolipoprotein C-III">
    <location>
        <begin position="24"/>
        <end position="96"/>
    </location>
</feature>
<feature type="region of interest" description="Lipid-binding" evidence="1">
    <location>
        <begin position="68"/>
        <end position="96"/>
    </location>
</feature>
<reference key="1">
    <citation type="journal article" date="1993" name="Genomics">
        <title>Characterization of the apolipoprotein AI and CIII genes in the domestic pig.</title>
        <authorList>
            <person name="Birchbauer A."/>
            <person name="Knipping G."/>
            <person name="Juritsch B."/>
            <person name="Aschauer H."/>
            <person name="Zechner R."/>
        </authorList>
    </citation>
    <scope>NUCLEOTIDE SEQUENCE [GENOMIC DNA]</scope>
    <scope>TISSUE SPECIFICITY</scope>
</reference>
<reference key="2">
    <citation type="journal article" date="1996" name="Mamm. Genome">
        <title>Evaluation and characterization of a porcine small intestine cDNA library: analysis of 839 clones.</title>
        <authorList>
            <person name="Winteroe A.K."/>
            <person name="Fredholm M."/>
            <person name="Davies W."/>
        </authorList>
    </citation>
    <scope>NUCLEOTIDE SEQUENCE [LARGE SCALE MRNA]</scope>
    <source>
        <tissue>Small intestine</tissue>
    </source>
</reference>
<reference key="3">
    <citation type="journal article" date="1993" name="Gene">
        <title>Sequences and expression of the porcine apolipoprotein A-I and C-III mRNAs.</title>
        <authorList>
            <person name="Trieu V.N."/>
            <person name="Hasler-Rapacz J."/>
            <person name="Rapacz J."/>
            <person name="Black D.D."/>
        </authorList>
    </citation>
    <scope>NUCLEOTIDE SEQUENCE [MRNA] OF 14-96</scope>
    <scope>PROTEIN SEQUENCE OF 34-58</scope>
    <scope>TISSUE SPECIFICITY</scope>
    <source>
        <tissue>Liver</tissue>
    </source>
</reference>
<reference key="4">
    <citation type="submission" date="1995-10" db="UniProtKB">
        <authorList>
            <person name="Hasler-Rapacz J.O."/>
            <person name="Chaudhary R."/>
            <person name="Chowdhary B.P."/>
            <person name="Trieu V.N."/>
            <person name="Jackson K."/>
            <person name="Gustavsson I."/>
            <person name="Rapacz J."/>
        </authorList>
    </citation>
    <scope>PROTEIN SEQUENCE OF 24-96</scope>
</reference>
<protein>
    <recommendedName>
        <fullName>Apolipoprotein C-III</fullName>
        <shortName>Apo-CIII</shortName>
        <shortName>ApoC-III</shortName>
    </recommendedName>
    <alternativeName>
        <fullName>Apolipoprotein C3</fullName>
    </alternativeName>
</protein>
<name>APOC3_PIG</name>
<sequence length="96" mass="10704">MQPRVLLVAGLLVLLACAQAIEAEDTSLLDKMQDYVKQATRTAQDALTSVKESEVAQQARGWVTDSISSLKDYWSTFKGKFTDFWDYTPKPEPSSS</sequence>